<keyword id="KW-1003">Cell membrane</keyword>
<keyword id="KW-1015">Disulfide bond</keyword>
<keyword id="KW-0297">G-protein coupled receptor</keyword>
<keyword id="KW-0325">Glycoprotein</keyword>
<keyword id="KW-0472">Membrane</keyword>
<keyword id="KW-0675">Receptor</keyword>
<keyword id="KW-1185">Reference proteome</keyword>
<keyword id="KW-0807">Transducer</keyword>
<keyword id="KW-0812">Transmembrane</keyword>
<keyword id="KW-1133">Transmembrane helix</keyword>
<protein>
    <recommendedName>
        <fullName>C-X-C chemokine receptor type 6</fullName>
        <shortName>CXC-R6</shortName>
        <shortName>CXCR-6</shortName>
    </recommendedName>
    <alternativeName>
        <fullName>G-protein coupled receptor STRL33</fullName>
    </alternativeName>
    <alternativeName>
        <fullName>G-protein coupled receptor bonzo</fullName>
    </alternativeName>
    <cdAntigenName>CD186</cdAntigenName>
</protein>
<gene>
    <name type="primary">CXCR6</name>
    <name type="synonym">BONZO</name>
    <name type="synonym">STRL33</name>
</gene>
<reference key="1">
    <citation type="journal article" date="2001" name="AIDS Res. Hum. Retroviruses">
        <title>Identification and comparison of eleven rhesus macaque chemokine receptors.</title>
        <authorList>
            <person name="Margulies B.J."/>
            <person name="Hauer D.A."/>
            <person name="Clements J.E."/>
        </authorList>
    </citation>
    <scope>NUCLEOTIDE SEQUENCE [GENOMIC DNA]</scope>
</reference>
<name>CXCR6_MACMU</name>
<comment type="function">
    <text>Receptor for the C-X-C chemokine CXCL16. Used as a coreceptor by SIVs and by strains of HIV-2 and m-tropic HIV-1.</text>
</comment>
<comment type="subcellular location">
    <subcellularLocation>
        <location>Cell membrane</location>
        <topology>Multi-pass membrane protein</topology>
    </subcellularLocation>
</comment>
<comment type="similarity">
    <text evidence="2">Belongs to the G-protein coupled receptor 1 family.</text>
</comment>
<feature type="chain" id="PRO_0000069367" description="C-X-C chemokine receptor type 6">
    <location>
        <begin position="1"/>
        <end position="343"/>
    </location>
</feature>
<feature type="topological domain" description="Extracellular" evidence="1">
    <location>
        <begin position="1"/>
        <end position="33"/>
    </location>
</feature>
<feature type="transmembrane region" description="Helical; Name=1" evidence="1">
    <location>
        <begin position="34"/>
        <end position="60"/>
    </location>
</feature>
<feature type="topological domain" description="Cytoplasmic" evidence="1">
    <location>
        <begin position="61"/>
        <end position="69"/>
    </location>
</feature>
<feature type="transmembrane region" description="Helical; Name=2" evidence="1">
    <location>
        <begin position="70"/>
        <end position="90"/>
    </location>
</feature>
<feature type="topological domain" description="Extracellular" evidence="1">
    <location>
        <begin position="91"/>
        <end position="104"/>
    </location>
</feature>
<feature type="transmembrane region" description="Helical; Name=3" evidence="1">
    <location>
        <begin position="105"/>
        <end position="126"/>
    </location>
</feature>
<feature type="topological domain" description="Cytoplasmic" evidence="1">
    <location>
        <begin position="127"/>
        <end position="144"/>
    </location>
</feature>
<feature type="transmembrane region" description="Helical; Name=4" evidence="1">
    <location>
        <begin position="145"/>
        <end position="165"/>
    </location>
</feature>
<feature type="topological domain" description="Extracellular" evidence="1">
    <location>
        <begin position="166"/>
        <end position="188"/>
    </location>
</feature>
<feature type="transmembrane region" description="Helical; Name=5" evidence="1">
    <location>
        <begin position="189"/>
        <end position="216"/>
    </location>
</feature>
<feature type="topological domain" description="Cytoplasmic" evidence="1">
    <location>
        <begin position="217"/>
        <end position="232"/>
    </location>
</feature>
<feature type="transmembrane region" description="Helical; Name=6" evidence="1">
    <location>
        <begin position="233"/>
        <end position="260"/>
    </location>
</feature>
<feature type="topological domain" description="Extracellular" evidence="1">
    <location>
        <begin position="261"/>
        <end position="276"/>
    </location>
</feature>
<feature type="transmembrane region" description="Helical; Name=7" evidence="1">
    <location>
        <begin position="277"/>
        <end position="294"/>
    </location>
</feature>
<feature type="topological domain" description="Cytoplasmic" evidence="1">
    <location>
        <begin position="295"/>
        <end position="343"/>
    </location>
</feature>
<feature type="glycosylation site" description="N-linked (GlcNAc...) asparagine" evidence="1">
    <location>
        <position position="17"/>
    </location>
</feature>
<feature type="disulfide bond" evidence="2">
    <location>
        <begin position="103"/>
        <end position="181"/>
    </location>
</feature>
<evidence type="ECO:0000255" key="1"/>
<evidence type="ECO:0000255" key="2">
    <source>
        <dbReference type="PROSITE-ProRule" id="PRU00521"/>
    </source>
</evidence>
<accession>Q9XT45</accession>
<sequence length="343" mass="39424">MAEYDHYEDDGFLNSFNDSSQEEHQDFLQFRKVFLPCMYLVVFVCGLVGNSLVLVISIFYHKLQSLTDVFLVNLPLADLVFVCTLPFWAYAGIHEWIFGQVMCKTLLGVYTINFYTSMLILTCITVDRFIVVVKATKAYNQQAKRMTWGKVICLLIWVISLLVSLPQIIYGNVFNLDKLICGYHDEEISTVVLATQMTLGFFLPLLAMIVCYSVIIKTLLHAGGFQKHRSLKIIFLVMAVFLLTQTPFNLVKLIRSTHWEYYAMTSFHYTIIVTEAIAYLRACLNPVLYAFVSLKFRKNFWKLVKDIGCLPYLGVSHQWKSSEDNSKTFSASHNVEATSMFQL</sequence>
<proteinExistence type="inferred from homology"/>
<dbReference type="EMBL" id="AF124380">
    <property type="protein sequence ID" value="AAD31419.1"/>
    <property type="molecule type" value="Genomic_DNA"/>
</dbReference>
<dbReference type="RefSeq" id="NP_001040606.1">
    <property type="nucleotide sequence ID" value="NM_001047141.1"/>
</dbReference>
<dbReference type="RefSeq" id="XP_014986565.1">
    <property type="nucleotide sequence ID" value="XM_015131079.2"/>
</dbReference>
<dbReference type="SMR" id="Q9XT45"/>
<dbReference type="FunCoup" id="Q9XT45">
    <property type="interactions" value="859"/>
</dbReference>
<dbReference type="STRING" id="9544.ENSMMUP00000039108"/>
<dbReference type="GlyCosmos" id="Q9XT45">
    <property type="glycosylation" value="1 site, No reported glycans"/>
</dbReference>
<dbReference type="PaxDb" id="9544-ENSMMUP00000039108"/>
<dbReference type="GeneID" id="713829"/>
<dbReference type="KEGG" id="mcc:713829"/>
<dbReference type="CTD" id="10663"/>
<dbReference type="eggNOG" id="ENOG502QSJQ">
    <property type="taxonomic scope" value="Eukaryota"/>
</dbReference>
<dbReference type="HOGENOM" id="CLU_009579_8_3_1"/>
<dbReference type="InParanoid" id="Q9XT45"/>
<dbReference type="OrthoDB" id="660555at2759"/>
<dbReference type="Proteomes" id="UP000006718">
    <property type="component" value="Unassembled WGS sequence"/>
</dbReference>
<dbReference type="GO" id="GO:0009897">
    <property type="term" value="C:external side of plasma membrane"/>
    <property type="evidence" value="ECO:0000318"/>
    <property type="project" value="GO_Central"/>
</dbReference>
<dbReference type="GO" id="GO:0019957">
    <property type="term" value="F:C-C chemokine binding"/>
    <property type="evidence" value="ECO:0000318"/>
    <property type="project" value="GO_Central"/>
</dbReference>
<dbReference type="GO" id="GO:0016493">
    <property type="term" value="F:C-C chemokine receptor activity"/>
    <property type="evidence" value="ECO:0000318"/>
    <property type="project" value="GO_Central"/>
</dbReference>
<dbReference type="GO" id="GO:0016494">
    <property type="term" value="F:C-X-C chemokine receptor activity"/>
    <property type="evidence" value="ECO:0007669"/>
    <property type="project" value="InterPro"/>
</dbReference>
<dbReference type="GO" id="GO:0015026">
    <property type="term" value="F:coreceptor activity"/>
    <property type="evidence" value="ECO:0007669"/>
    <property type="project" value="InterPro"/>
</dbReference>
<dbReference type="GO" id="GO:0019722">
    <property type="term" value="P:calcium-mediated signaling"/>
    <property type="evidence" value="ECO:0000318"/>
    <property type="project" value="GO_Central"/>
</dbReference>
<dbReference type="GO" id="GO:0060326">
    <property type="term" value="P:cell chemotaxis"/>
    <property type="evidence" value="ECO:0000318"/>
    <property type="project" value="GO_Central"/>
</dbReference>
<dbReference type="GO" id="GO:0006955">
    <property type="term" value="P:immune response"/>
    <property type="evidence" value="ECO:0000318"/>
    <property type="project" value="GO_Central"/>
</dbReference>
<dbReference type="GO" id="GO:0006954">
    <property type="term" value="P:inflammatory response"/>
    <property type="evidence" value="ECO:0007669"/>
    <property type="project" value="InterPro"/>
</dbReference>
<dbReference type="GO" id="GO:0007204">
    <property type="term" value="P:positive regulation of cytosolic calcium ion concentration"/>
    <property type="evidence" value="ECO:0000318"/>
    <property type="project" value="GO_Central"/>
</dbReference>
<dbReference type="CDD" id="cd15173">
    <property type="entry name" value="7tmA_CXCR6"/>
    <property type="match status" value="1"/>
</dbReference>
<dbReference type="FunFam" id="1.20.1070.10:FF:000035">
    <property type="entry name" value="C-C chemokine receptor type 6"/>
    <property type="match status" value="1"/>
</dbReference>
<dbReference type="Gene3D" id="1.20.1070.10">
    <property type="entry name" value="Rhodopsin 7-helix transmembrane proteins"/>
    <property type="match status" value="1"/>
</dbReference>
<dbReference type="InterPro" id="IPR050119">
    <property type="entry name" value="CCR1-9-like"/>
</dbReference>
<dbReference type="InterPro" id="IPR002235">
    <property type="entry name" value="Chemokine_CXCR6"/>
</dbReference>
<dbReference type="InterPro" id="IPR000355">
    <property type="entry name" value="Chemokine_rcpt"/>
</dbReference>
<dbReference type="InterPro" id="IPR000276">
    <property type="entry name" value="GPCR_Rhodpsn"/>
</dbReference>
<dbReference type="InterPro" id="IPR017452">
    <property type="entry name" value="GPCR_Rhodpsn_7TM"/>
</dbReference>
<dbReference type="PANTHER" id="PTHR10489:SF705">
    <property type="entry name" value="C-X-C CHEMOKINE RECEPTOR TYPE 6"/>
    <property type="match status" value="1"/>
</dbReference>
<dbReference type="PANTHER" id="PTHR10489">
    <property type="entry name" value="CELL ADHESION MOLECULE"/>
    <property type="match status" value="1"/>
</dbReference>
<dbReference type="Pfam" id="PF00001">
    <property type="entry name" value="7tm_1"/>
    <property type="match status" value="1"/>
</dbReference>
<dbReference type="PRINTS" id="PR00657">
    <property type="entry name" value="CCCHEMOKINER"/>
</dbReference>
<dbReference type="PRINTS" id="PR01105">
    <property type="entry name" value="CXCCHMKINER6"/>
</dbReference>
<dbReference type="PRINTS" id="PR00237">
    <property type="entry name" value="GPCRRHODOPSN"/>
</dbReference>
<dbReference type="SUPFAM" id="SSF81321">
    <property type="entry name" value="Family A G protein-coupled receptor-like"/>
    <property type="match status" value="1"/>
</dbReference>
<dbReference type="PROSITE" id="PS00237">
    <property type="entry name" value="G_PROTEIN_RECEP_F1_1"/>
    <property type="match status" value="1"/>
</dbReference>
<dbReference type="PROSITE" id="PS50262">
    <property type="entry name" value="G_PROTEIN_RECEP_F1_2"/>
    <property type="match status" value="1"/>
</dbReference>
<organism>
    <name type="scientific">Macaca mulatta</name>
    <name type="common">Rhesus macaque</name>
    <dbReference type="NCBI Taxonomy" id="9544"/>
    <lineage>
        <taxon>Eukaryota</taxon>
        <taxon>Metazoa</taxon>
        <taxon>Chordata</taxon>
        <taxon>Craniata</taxon>
        <taxon>Vertebrata</taxon>
        <taxon>Euteleostomi</taxon>
        <taxon>Mammalia</taxon>
        <taxon>Eutheria</taxon>
        <taxon>Euarchontoglires</taxon>
        <taxon>Primates</taxon>
        <taxon>Haplorrhini</taxon>
        <taxon>Catarrhini</taxon>
        <taxon>Cercopithecidae</taxon>
        <taxon>Cercopithecinae</taxon>
        <taxon>Macaca</taxon>
    </lineage>
</organism>